<reference key="1">
    <citation type="journal article" date="2005" name="Nucleic Acids Res.">
        <title>The genome sequence of Xanthomonas oryzae pathovar oryzae KACC10331, the bacterial blight pathogen of rice.</title>
        <authorList>
            <person name="Lee B.-M."/>
            <person name="Park Y.-J."/>
            <person name="Park D.-S."/>
            <person name="Kang H.-W."/>
            <person name="Kim J.-G."/>
            <person name="Song E.-S."/>
            <person name="Park I.-C."/>
            <person name="Yoon U.-H."/>
            <person name="Hahn J.-H."/>
            <person name="Koo B.-S."/>
            <person name="Lee G.-B."/>
            <person name="Kim H."/>
            <person name="Park H.-S."/>
            <person name="Yoon K.-O."/>
            <person name="Kim J.-H."/>
            <person name="Jung C.-H."/>
            <person name="Koh N.-H."/>
            <person name="Seo J.-S."/>
            <person name="Go S.-J."/>
        </authorList>
    </citation>
    <scope>NUCLEOTIDE SEQUENCE [LARGE SCALE GENOMIC DNA]</scope>
    <source>
        <strain>KACC10331 / KXO85</strain>
    </source>
</reference>
<name>RNH_XANOR</name>
<comment type="function">
    <text evidence="1">Endonuclease that specifically degrades the RNA of RNA-DNA hybrids.</text>
</comment>
<comment type="catalytic activity">
    <reaction evidence="1">
        <text>Endonucleolytic cleavage to 5'-phosphomonoester.</text>
        <dbReference type="EC" id="3.1.26.4"/>
    </reaction>
</comment>
<comment type="cofactor">
    <cofactor evidence="1">
        <name>Mg(2+)</name>
        <dbReference type="ChEBI" id="CHEBI:18420"/>
    </cofactor>
    <text evidence="1">Binds 1 Mg(2+) ion per subunit. May bind a second metal ion at a regulatory site, or after substrate binding.</text>
</comment>
<comment type="subunit">
    <text evidence="1">Monomer.</text>
</comment>
<comment type="subcellular location">
    <subcellularLocation>
        <location evidence="1">Cytoplasm</location>
    </subcellularLocation>
</comment>
<comment type="similarity">
    <text evidence="1">Belongs to the RNase H family.</text>
</comment>
<accession>Q5H426</accession>
<protein>
    <recommendedName>
        <fullName evidence="1">Ribonuclease H</fullName>
        <shortName evidence="1">RNase H</shortName>
        <ecNumber evidence="1">3.1.26.4</ecNumber>
    </recommendedName>
</protein>
<dbReference type="EC" id="3.1.26.4" evidence="1"/>
<dbReference type="EMBL" id="AE013598">
    <property type="protein sequence ID" value="AAW74295.1"/>
    <property type="molecule type" value="Genomic_DNA"/>
</dbReference>
<dbReference type="SMR" id="Q5H426"/>
<dbReference type="STRING" id="291331.XOO1041"/>
<dbReference type="KEGG" id="xoo:XOO1041"/>
<dbReference type="HOGENOM" id="CLU_030894_6_0_6"/>
<dbReference type="Proteomes" id="UP000006735">
    <property type="component" value="Chromosome"/>
</dbReference>
<dbReference type="GO" id="GO:0005737">
    <property type="term" value="C:cytoplasm"/>
    <property type="evidence" value="ECO:0007669"/>
    <property type="project" value="UniProtKB-SubCell"/>
</dbReference>
<dbReference type="GO" id="GO:0000287">
    <property type="term" value="F:magnesium ion binding"/>
    <property type="evidence" value="ECO:0007669"/>
    <property type="project" value="UniProtKB-UniRule"/>
</dbReference>
<dbReference type="GO" id="GO:0003676">
    <property type="term" value="F:nucleic acid binding"/>
    <property type="evidence" value="ECO:0007669"/>
    <property type="project" value="InterPro"/>
</dbReference>
<dbReference type="GO" id="GO:0004523">
    <property type="term" value="F:RNA-DNA hybrid ribonuclease activity"/>
    <property type="evidence" value="ECO:0007669"/>
    <property type="project" value="UniProtKB-UniRule"/>
</dbReference>
<dbReference type="GO" id="GO:0043137">
    <property type="term" value="P:DNA replication, removal of RNA primer"/>
    <property type="evidence" value="ECO:0007669"/>
    <property type="project" value="TreeGrafter"/>
</dbReference>
<dbReference type="CDD" id="cd09278">
    <property type="entry name" value="RNase_HI_prokaryote_like"/>
    <property type="match status" value="1"/>
</dbReference>
<dbReference type="FunFam" id="3.30.420.10:FF:000008">
    <property type="entry name" value="Ribonuclease H"/>
    <property type="match status" value="1"/>
</dbReference>
<dbReference type="Gene3D" id="3.30.420.10">
    <property type="entry name" value="Ribonuclease H-like superfamily/Ribonuclease H"/>
    <property type="match status" value="1"/>
</dbReference>
<dbReference type="HAMAP" id="MF_00042">
    <property type="entry name" value="RNase_H"/>
    <property type="match status" value="1"/>
</dbReference>
<dbReference type="InterPro" id="IPR050092">
    <property type="entry name" value="RNase_H"/>
</dbReference>
<dbReference type="InterPro" id="IPR012337">
    <property type="entry name" value="RNaseH-like_sf"/>
</dbReference>
<dbReference type="InterPro" id="IPR002156">
    <property type="entry name" value="RNaseH_domain"/>
</dbReference>
<dbReference type="InterPro" id="IPR036397">
    <property type="entry name" value="RNaseH_sf"/>
</dbReference>
<dbReference type="InterPro" id="IPR022892">
    <property type="entry name" value="RNaseHI"/>
</dbReference>
<dbReference type="NCBIfam" id="NF001236">
    <property type="entry name" value="PRK00203.1"/>
    <property type="match status" value="1"/>
</dbReference>
<dbReference type="PANTHER" id="PTHR10642">
    <property type="entry name" value="RIBONUCLEASE H1"/>
    <property type="match status" value="1"/>
</dbReference>
<dbReference type="PANTHER" id="PTHR10642:SF26">
    <property type="entry name" value="RIBONUCLEASE H1"/>
    <property type="match status" value="1"/>
</dbReference>
<dbReference type="Pfam" id="PF00075">
    <property type="entry name" value="RNase_H"/>
    <property type="match status" value="1"/>
</dbReference>
<dbReference type="SUPFAM" id="SSF53098">
    <property type="entry name" value="Ribonuclease H-like"/>
    <property type="match status" value="1"/>
</dbReference>
<dbReference type="PROSITE" id="PS50879">
    <property type="entry name" value="RNASE_H_1"/>
    <property type="match status" value="1"/>
</dbReference>
<feature type="chain" id="PRO_0000195424" description="Ribonuclease H">
    <location>
        <begin position="1"/>
        <end position="150"/>
    </location>
</feature>
<feature type="domain" description="RNase H type-1" evidence="2">
    <location>
        <begin position="1"/>
        <end position="141"/>
    </location>
</feature>
<feature type="binding site" evidence="1">
    <location>
        <position position="9"/>
    </location>
    <ligand>
        <name>Mg(2+)</name>
        <dbReference type="ChEBI" id="CHEBI:18420"/>
        <label>1</label>
    </ligand>
</feature>
<feature type="binding site" evidence="1">
    <location>
        <position position="9"/>
    </location>
    <ligand>
        <name>Mg(2+)</name>
        <dbReference type="ChEBI" id="CHEBI:18420"/>
        <label>2</label>
    </ligand>
</feature>
<feature type="binding site" evidence="1">
    <location>
        <position position="47"/>
    </location>
    <ligand>
        <name>Mg(2+)</name>
        <dbReference type="ChEBI" id="CHEBI:18420"/>
        <label>1</label>
    </ligand>
</feature>
<feature type="binding site" evidence="1">
    <location>
        <position position="69"/>
    </location>
    <ligand>
        <name>Mg(2+)</name>
        <dbReference type="ChEBI" id="CHEBI:18420"/>
        <label>1</label>
    </ligand>
</feature>
<feature type="binding site" evidence="1">
    <location>
        <position position="133"/>
    </location>
    <ligand>
        <name>Mg(2+)</name>
        <dbReference type="ChEBI" id="CHEBI:18420"/>
        <label>2</label>
    </ligand>
</feature>
<evidence type="ECO:0000255" key="1">
    <source>
        <dbReference type="HAMAP-Rule" id="MF_00042"/>
    </source>
</evidence>
<evidence type="ECO:0000255" key="2">
    <source>
        <dbReference type="PROSITE-ProRule" id="PRU00408"/>
    </source>
</evidence>
<keyword id="KW-0963">Cytoplasm</keyword>
<keyword id="KW-0255">Endonuclease</keyword>
<keyword id="KW-0378">Hydrolase</keyword>
<keyword id="KW-0460">Magnesium</keyword>
<keyword id="KW-0479">Metal-binding</keyword>
<keyword id="KW-0540">Nuclease</keyword>
<keyword id="KW-1185">Reference proteome</keyword>
<sequence>MKSIEVHTDGSCLGNPGPGGWAALLRYNGREKELAGGEAVSTNNRMELMAAIMALETLTEPCEIVLHTDSQYVRQGITEWMPGWVRRNWKTAGGDPVKNRELWERLHAATQRHRIDWRWVKGHNGDPDNERVDVLARNQATAQRDGRATS</sequence>
<gene>
    <name evidence="1" type="primary">rnhA</name>
    <name type="ordered locus">XOO1041</name>
</gene>
<proteinExistence type="inferred from homology"/>
<organism>
    <name type="scientific">Xanthomonas oryzae pv. oryzae (strain KACC10331 / KXO85)</name>
    <dbReference type="NCBI Taxonomy" id="291331"/>
    <lineage>
        <taxon>Bacteria</taxon>
        <taxon>Pseudomonadati</taxon>
        <taxon>Pseudomonadota</taxon>
        <taxon>Gammaproteobacteria</taxon>
        <taxon>Lysobacterales</taxon>
        <taxon>Lysobacteraceae</taxon>
        <taxon>Xanthomonas</taxon>
    </lineage>
</organism>